<comment type="function">
    <text>Might be needed during pollen development and tube growth.</text>
</comment>
<comment type="catalytic activity">
    <reaction>
        <text>Eliminative cleavage of (1-&gt;4)-alpha-D-galacturonan to give oligosaccharides with 4-deoxy-alpha-D-galact-4-enuronosyl groups at their non-reducing ends.</text>
        <dbReference type="EC" id="4.2.2.2"/>
    </reaction>
</comment>
<comment type="cofactor">
    <cofactor evidence="1">
        <name>Ca(2+)</name>
        <dbReference type="ChEBI" id="CHEBI:29108"/>
    </cofactor>
    <text evidence="1">Binds 1 Ca(2+) ion. Required for its activity.</text>
</comment>
<comment type="pathway">
    <text>Glycan metabolism; pectin degradation; 2-dehydro-3-deoxy-D-gluconate from pectin: step 2/5.</text>
</comment>
<comment type="tissue specificity">
    <text>Expressed in anthers and pollen.</text>
</comment>
<comment type="similarity">
    <text evidence="3">Belongs to the polysaccharide lyase 1 family.</text>
</comment>
<reference key="1">
    <citation type="journal article" date="1990" name="Plant Mol. Biol.">
        <title>Molecular and genetic characterization of two pollen-expressed genes that have sequence similarity to pectate lyases of the plant pathogen Erwinia.</title>
        <authorList>
            <person name="Wing R.A."/>
            <person name="Yamaguchi J."/>
            <person name="Larabell S.K."/>
            <person name="Ursin V.M."/>
            <person name="McCormick S."/>
        </authorList>
    </citation>
    <scope>NUCLEOTIDE SEQUENCE [GENOMIC DNA]</scope>
    <source>
        <strain>cv. VF36</strain>
        <tissue>Anther</tissue>
    </source>
</reference>
<sequence>MGGPKIKYSFLFLCITFATIIPSLMAHIGHYDEVWRRRAEEAKEYARNIYEPHPENVTLAFNQKLRDTMKELKKVKGTHNNSTRRGLGTKKYTGPCMVTNPIDKCWRCDPNWADNRKKLADCAMGFGSKAIGGKDGEFYVVTDNSDDYNDPKPGTLRHAVIQKEPLWIIFKRGMNIRLHQEMIMQSDKTIDARGVNVHITKGAGITLQYIKNVIIHGLHIHDIVEGNGGMVRDAVDHIGIRTKSDGDGISIFGASYIWIDHVSMQRCYDGLIDAVEGSTGITISNGHFTDHNEVMLFGASDSSSIDQVMQITLAFNHFGKRLIQRMPRCRWGYIHVVNNDYTHWNMYAIGGSMHPTIIHQGNRFIAPPDIFKKQVTKREYNPESVWMQWTWRSEGNLFMNGAYFTESGDPEWSSKHKDLYDGISAAPAEDVTWMTRFAGVLGCKPGKPC</sequence>
<feature type="signal peptide" evidence="2">
    <location>
        <begin position="1"/>
        <end position="22"/>
    </location>
</feature>
<feature type="chain" id="PRO_0000024891" description="Probable pectate lyase P59">
    <location>
        <begin position="23"/>
        <end position="449"/>
    </location>
</feature>
<feature type="active site" evidence="2">
    <location>
        <position position="325"/>
    </location>
</feature>
<feature type="binding site" evidence="1">
    <location>
        <position position="245"/>
    </location>
    <ligand>
        <name>Ca(2+)</name>
        <dbReference type="ChEBI" id="CHEBI:29108"/>
    </ligand>
</feature>
<feature type="binding site" evidence="1">
    <location>
        <position position="269"/>
    </location>
    <ligand>
        <name>Ca(2+)</name>
        <dbReference type="ChEBI" id="CHEBI:29108"/>
    </ligand>
</feature>
<feature type="binding site" evidence="1">
    <location>
        <position position="273"/>
    </location>
    <ligand>
        <name>Ca(2+)</name>
        <dbReference type="ChEBI" id="CHEBI:29108"/>
    </ligand>
</feature>
<feature type="glycosylation site" description="N-linked (GlcNAc...) asparagine" evidence="2">
    <location>
        <position position="56"/>
    </location>
</feature>
<feature type="glycosylation site" description="N-linked (GlcNAc...) asparagine" evidence="2">
    <location>
        <position position="80"/>
    </location>
</feature>
<feature type="glycosylation site" description="N-linked (GlcNAc...) asparagine" evidence="2">
    <location>
        <position position="81"/>
    </location>
</feature>
<proteinExistence type="evidence at transcript level"/>
<keyword id="KW-0106">Calcium</keyword>
<keyword id="KW-0325">Glycoprotein</keyword>
<keyword id="KW-0456">Lyase</keyword>
<keyword id="KW-0479">Metal-binding</keyword>
<keyword id="KW-1185">Reference proteome</keyword>
<keyword id="KW-0732">Signal</keyword>
<dbReference type="EC" id="4.2.2.2"/>
<dbReference type="EMBL" id="X15499">
    <property type="protein sequence ID" value="CAA33523.1"/>
    <property type="molecule type" value="Genomic_DNA"/>
</dbReference>
<dbReference type="PIR" id="S27098">
    <property type="entry name" value="S27098"/>
</dbReference>
<dbReference type="SMR" id="P15722"/>
<dbReference type="FunCoup" id="P15722">
    <property type="interactions" value="90"/>
</dbReference>
<dbReference type="CAZy" id="PL1">
    <property type="family name" value="Polysaccharide Lyase Family 1"/>
</dbReference>
<dbReference type="GlyCosmos" id="P15722">
    <property type="glycosylation" value="3 sites, No reported glycans"/>
</dbReference>
<dbReference type="PaxDb" id="4081-Solyc03g058890.2.1"/>
<dbReference type="eggNOG" id="ENOG502QQE2">
    <property type="taxonomic scope" value="Eukaryota"/>
</dbReference>
<dbReference type="InParanoid" id="P15722"/>
<dbReference type="UniPathway" id="UPA00545">
    <property type="reaction ID" value="UER00824"/>
</dbReference>
<dbReference type="Proteomes" id="UP000004994">
    <property type="component" value="Unplaced"/>
</dbReference>
<dbReference type="GO" id="GO:0046872">
    <property type="term" value="F:metal ion binding"/>
    <property type="evidence" value="ECO:0007669"/>
    <property type="project" value="UniProtKB-KW"/>
</dbReference>
<dbReference type="GO" id="GO:0030570">
    <property type="term" value="F:pectate lyase activity"/>
    <property type="evidence" value="ECO:0007669"/>
    <property type="project" value="UniProtKB-EC"/>
</dbReference>
<dbReference type="GO" id="GO:0045490">
    <property type="term" value="P:pectin catabolic process"/>
    <property type="evidence" value="ECO:0007669"/>
    <property type="project" value="UniProtKB-UniPathway"/>
</dbReference>
<dbReference type="Gene3D" id="2.160.20.10">
    <property type="entry name" value="Single-stranded right-handed beta-helix, Pectin lyase-like"/>
    <property type="match status" value="1"/>
</dbReference>
<dbReference type="InterPro" id="IPR018082">
    <property type="entry name" value="AmbAllergen"/>
</dbReference>
<dbReference type="InterPro" id="IPR002022">
    <property type="entry name" value="Pec_lyase"/>
</dbReference>
<dbReference type="InterPro" id="IPR007524">
    <property type="entry name" value="Pec_lyase_N"/>
</dbReference>
<dbReference type="InterPro" id="IPR012334">
    <property type="entry name" value="Pectin_lyas_fold"/>
</dbReference>
<dbReference type="InterPro" id="IPR011050">
    <property type="entry name" value="Pectin_lyase_fold/virulence"/>
</dbReference>
<dbReference type="InterPro" id="IPR045032">
    <property type="entry name" value="PEL"/>
</dbReference>
<dbReference type="PANTHER" id="PTHR31683">
    <property type="entry name" value="PECTATE LYASE 18-RELATED"/>
    <property type="match status" value="1"/>
</dbReference>
<dbReference type="PANTHER" id="PTHR31683:SF203">
    <property type="entry name" value="PECTATE LYASE P59-RELATED"/>
    <property type="match status" value="1"/>
</dbReference>
<dbReference type="Pfam" id="PF04431">
    <property type="entry name" value="Pec_lyase_N"/>
    <property type="match status" value="1"/>
</dbReference>
<dbReference type="Pfam" id="PF00544">
    <property type="entry name" value="Pectate_lyase_4"/>
    <property type="match status" value="1"/>
</dbReference>
<dbReference type="PRINTS" id="PR00807">
    <property type="entry name" value="AMBALLERGEN"/>
</dbReference>
<dbReference type="SMART" id="SM00656">
    <property type="entry name" value="Amb_all"/>
    <property type="match status" value="1"/>
</dbReference>
<dbReference type="SUPFAM" id="SSF51126">
    <property type="entry name" value="Pectin lyase-like"/>
    <property type="match status" value="1"/>
</dbReference>
<name>PLY59_SOLLC</name>
<organism>
    <name type="scientific">Solanum lycopersicum</name>
    <name type="common">Tomato</name>
    <name type="synonym">Lycopersicon esculentum</name>
    <dbReference type="NCBI Taxonomy" id="4081"/>
    <lineage>
        <taxon>Eukaryota</taxon>
        <taxon>Viridiplantae</taxon>
        <taxon>Streptophyta</taxon>
        <taxon>Embryophyta</taxon>
        <taxon>Tracheophyta</taxon>
        <taxon>Spermatophyta</taxon>
        <taxon>Magnoliopsida</taxon>
        <taxon>eudicotyledons</taxon>
        <taxon>Gunneridae</taxon>
        <taxon>Pentapetalae</taxon>
        <taxon>asterids</taxon>
        <taxon>lamiids</taxon>
        <taxon>Solanales</taxon>
        <taxon>Solanaceae</taxon>
        <taxon>Solanoideae</taxon>
        <taxon>Solaneae</taxon>
        <taxon>Solanum</taxon>
        <taxon>Solanum subgen. Lycopersicon</taxon>
    </lineage>
</organism>
<protein>
    <recommendedName>
        <fullName>Probable pectate lyase P59</fullName>
        <ecNumber>4.2.2.2</ecNumber>
    </recommendedName>
</protein>
<accession>P15722</accession>
<evidence type="ECO:0000250" key="1"/>
<evidence type="ECO:0000255" key="2"/>
<evidence type="ECO:0000305" key="3"/>
<gene>
    <name type="primary">LAT59</name>
</gene>